<proteinExistence type="inferred from homology"/>
<feature type="chain" id="PRO_0000273810" description="Large ribosomal subunit protein uL30">
    <location>
        <begin position="1"/>
        <end position="61"/>
    </location>
</feature>
<name>RL30_NEIG1</name>
<evidence type="ECO:0000255" key="1">
    <source>
        <dbReference type="HAMAP-Rule" id="MF_01371"/>
    </source>
</evidence>
<evidence type="ECO:0000305" key="2"/>
<protein>
    <recommendedName>
        <fullName evidence="1">Large ribosomal subunit protein uL30</fullName>
    </recommendedName>
    <alternativeName>
        <fullName evidence="2">50S ribosomal protein L30</fullName>
    </alternativeName>
</protein>
<reference key="1">
    <citation type="submission" date="2003-03" db="EMBL/GenBank/DDBJ databases">
        <title>The complete genome sequence of Neisseria gonorrhoeae.</title>
        <authorList>
            <person name="Lewis L.A."/>
            <person name="Gillaspy A.F."/>
            <person name="McLaughlin R.E."/>
            <person name="Gipson M."/>
            <person name="Ducey T.F."/>
            <person name="Ownbey T."/>
            <person name="Hartman K."/>
            <person name="Nydick C."/>
            <person name="Carson M.B."/>
            <person name="Vaughn J."/>
            <person name="Thomson C."/>
            <person name="Song L."/>
            <person name="Lin S."/>
            <person name="Yuan X."/>
            <person name="Najar F."/>
            <person name="Zhan M."/>
            <person name="Ren Q."/>
            <person name="Zhu H."/>
            <person name="Qi S."/>
            <person name="Kenton S.M."/>
            <person name="Lai H."/>
            <person name="White J.D."/>
            <person name="Clifton S."/>
            <person name="Roe B.A."/>
            <person name="Dyer D.W."/>
        </authorList>
    </citation>
    <scope>NUCLEOTIDE SEQUENCE [LARGE SCALE GENOMIC DNA]</scope>
    <source>
        <strain>ATCC 700825 / FA 1090</strain>
    </source>
</reference>
<keyword id="KW-1185">Reference proteome</keyword>
<keyword id="KW-0687">Ribonucleoprotein</keyword>
<keyword id="KW-0689">Ribosomal protein</keyword>
<sequence length="61" mass="6936">MAEQKKIRVTLVKSLIGTIESHRACARGLGLRRREHTVEVLDTSENRGMINKISYLLKVES</sequence>
<dbReference type="EMBL" id="AE004969">
    <property type="protein sequence ID" value="AAW90442.1"/>
    <property type="molecule type" value="Genomic_DNA"/>
</dbReference>
<dbReference type="RefSeq" id="WP_003690310.1">
    <property type="nucleotide sequence ID" value="NC_002946.2"/>
</dbReference>
<dbReference type="RefSeq" id="YP_208854.1">
    <property type="nucleotide sequence ID" value="NC_002946.2"/>
</dbReference>
<dbReference type="SMR" id="Q5F5U5"/>
<dbReference type="STRING" id="242231.NGO_18231"/>
<dbReference type="GeneID" id="66754313"/>
<dbReference type="KEGG" id="ngo:NGO_18231"/>
<dbReference type="PATRIC" id="fig|242231.10.peg.2191"/>
<dbReference type="HOGENOM" id="CLU_131047_1_4_4"/>
<dbReference type="Proteomes" id="UP000000535">
    <property type="component" value="Chromosome"/>
</dbReference>
<dbReference type="GO" id="GO:0022625">
    <property type="term" value="C:cytosolic large ribosomal subunit"/>
    <property type="evidence" value="ECO:0007669"/>
    <property type="project" value="TreeGrafter"/>
</dbReference>
<dbReference type="GO" id="GO:0003735">
    <property type="term" value="F:structural constituent of ribosome"/>
    <property type="evidence" value="ECO:0007669"/>
    <property type="project" value="InterPro"/>
</dbReference>
<dbReference type="GO" id="GO:0006412">
    <property type="term" value="P:translation"/>
    <property type="evidence" value="ECO:0007669"/>
    <property type="project" value="UniProtKB-UniRule"/>
</dbReference>
<dbReference type="CDD" id="cd01658">
    <property type="entry name" value="Ribosomal_L30"/>
    <property type="match status" value="1"/>
</dbReference>
<dbReference type="FunFam" id="3.30.1390.20:FF:000001">
    <property type="entry name" value="50S ribosomal protein L30"/>
    <property type="match status" value="1"/>
</dbReference>
<dbReference type="Gene3D" id="3.30.1390.20">
    <property type="entry name" value="Ribosomal protein L30, ferredoxin-like fold domain"/>
    <property type="match status" value="1"/>
</dbReference>
<dbReference type="HAMAP" id="MF_01371_B">
    <property type="entry name" value="Ribosomal_uL30_B"/>
    <property type="match status" value="1"/>
</dbReference>
<dbReference type="InterPro" id="IPR036919">
    <property type="entry name" value="Ribo_uL30_ferredoxin-like_sf"/>
</dbReference>
<dbReference type="InterPro" id="IPR005996">
    <property type="entry name" value="Ribosomal_uL30_bac-type"/>
</dbReference>
<dbReference type="InterPro" id="IPR016082">
    <property type="entry name" value="Ribosomal_uL30_ferredoxin-like"/>
</dbReference>
<dbReference type="NCBIfam" id="TIGR01308">
    <property type="entry name" value="rpmD_bact"/>
    <property type="match status" value="1"/>
</dbReference>
<dbReference type="PANTHER" id="PTHR15892:SF2">
    <property type="entry name" value="LARGE RIBOSOMAL SUBUNIT PROTEIN UL30M"/>
    <property type="match status" value="1"/>
</dbReference>
<dbReference type="PANTHER" id="PTHR15892">
    <property type="entry name" value="MITOCHONDRIAL RIBOSOMAL PROTEIN L30"/>
    <property type="match status" value="1"/>
</dbReference>
<dbReference type="Pfam" id="PF00327">
    <property type="entry name" value="Ribosomal_L30"/>
    <property type="match status" value="1"/>
</dbReference>
<dbReference type="PIRSF" id="PIRSF002211">
    <property type="entry name" value="Ribosomal_L30_bac-type"/>
    <property type="match status" value="1"/>
</dbReference>
<dbReference type="SUPFAM" id="SSF55129">
    <property type="entry name" value="Ribosomal protein L30p/L7e"/>
    <property type="match status" value="1"/>
</dbReference>
<accession>Q5F5U5</accession>
<comment type="subunit">
    <text evidence="1">Part of the 50S ribosomal subunit.</text>
</comment>
<comment type="similarity">
    <text evidence="1">Belongs to the universal ribosomal protein uL30 family.</text>
</comment>
<organism>
    <name type="scientific">Neisseria gonorrhoeae (strain ATCC 700825 / FA 1090)</name>
    <dbReference type="NCBI Taxonomy" id="242231"/>
    <lineage>
        <taxon>Bacteria</taxon>
        <taxon>Pseudomonadati</taxon>
        <taxon>Pseudomonadota</taxon>
        <taxon>Betaproteobacteria</taxon>
        <taxon>Neisseriales</taxon>
        <taxon>Neisseriaceae</taxon>
        <taxon>Neisseria</taxon>
    </lineage>
</organism>
<gene>
    <name evidence="1" type="primary">rpmD</name>
    <name type="ordered locus">NGO_18231</name>
    <name type="ORF">NGO_1823.1</name>
</gene>